<organism>
    <name type="scientific">Bacteroides thetaiotaomicron (strain ATCC 29148 / DSM 2079 / JCM 5827 / CCUG 10774 / NCTC 10582 / VPI-5482 / E50)</name>
    <dbReference type="NCBI Taxonomy" id="226186"/>
    <lineage>
        <taxon>Bacteria</taxon>
        <taxon>Pseudomonadati</taxon>
        <taxon>Bacteroidota</taxon>
        <taxon>Bacteroidia</taxon>
        <taxon>Bacteroidales</taxon>
        <taxon>Bacteroidaceae</taxon>
        <taxon>Bacteroides</taxon>
    </lineage>
</organism>
<proteinExistence type="inferred from homology"/>
<sequence>MANPFFQFKQFTVWHDKCAMKVGTDGVLLGAWASVQGAHRILDIGTGTGLVALMLAQRSLPDANIVALEIDEAAAGQAKENVARSPWKDRIEVVKQDFLFYQSPDKFDVIVSNPPYFVDSLSCPDQQRSMARHNDSLTYEKLLKGVADLLKKEGTFTIVIPTDVADRVKTAASEYHLYATRQLNVITKPGGTPKRMLITFTFNNEGCIKEELLTEVARHQYSEEYKELTREYYLHLK</sequence>
<reference key="1">
    <citation type="journal article" date="2003" name="Science">
        <title>A genomic view of the human-Bacteroides thetaiotaomicron symbiosis.</title>
        <authorList>
            <person name="Xu J."/>
            <person name="Bjursell M.K."/>
            <person name="Himrod J."/>
            <person name="Deng S."/>
            <person name="Carmichael L.K."/>
            <person name="Chiang H.C."/>
            <person name="Hooper L.V."/>
            <person name="Gordon J.I."/>
        </authorList>
    </citation>
    <scope>NUCLEOTIDE SEQUENCE [LARGE SCALE GENOMIC DNA]</scope>
    <source>
        <strain>ATCC 29148 / DSM 2079 / JCM 5827 / CCUG 10774 / NCTC 10582 / VPI-5482 / E50</strain>
    </source>
</reference>
<evidence type="ECO:0000255" key="1">
    <source>
        <dbReference type="HAMAP-Rule" id="MF_01872"/>
    </source>
</evidence>
<evidence type="ECO:0000305" key="2"/>
<feature type="chain" id="PRO_0000387343" description="tRNA1(Val) (adenine(37)-N6)-methyltransferase">
    <location>
        <begin position="1"/>
        <end position="237"/>
    </location>
</feature>
<protein>
    <recommendedName>
        <fullName evidence="1">tRNA1(Val) (adenine(37)-N6)-methyltransferase</fullName>
        <ecNumber evidence="1">2.1.1.223</ecNumber>
    </recommendedName>
    <alternativeName>
        <fullName evidence="1">tRNA m6A37 methyltransferase</fullName>
    </alternativeName>
</protein>
<accession>Q8A9H7</accession>
<comment type="function">
    <text evidence="1">Specifically methylates the adenine in position 37 of tRNA(1)(Val) (anticodon cmo5UAC).</text>
</comment>
<comment type="catalytic activity">
    <reaction evidence="1">
        <text>adenosine(37) in tRNA1(Val) + S-adenosyl-L-methionine = N(6)-methyladenosine(37) in tRNA1(Val) + S-adenosyl-L-homocysteine + H(+)</text>
        <dbReference type="Rhea" id="RHEA:43160"/>
        <dbReference type="Rhea" id="RHEA-COMP:10369"/>
        <dbReference type="Rhea" id="RHEA-COMP:10370"/>
        <dbReference type="ChEBI" id="CHEBI:15378"/>
        <dbReference type="ChEBI" id="CHEBI:57856"/>
        <dbReference type="ChEBI" id="CHEBI:59789"/>
        <dbReference type="ChEBI" id="CHEBI:74411"/>
        <dbReference type="ChEBI" id="CHEBI:74449"/>
        <dbReference type="EC" id="2.1.1.223"/>
    </reaction>
</comment>
<comment type="subcellular location">
    <subcellularLocation>
        <location evidence="1">Cytoplasm</location>
    </subcellularLocation>
</comment>
<comment type="similarity">
    <text evidence="1">Belongs to the methyltransferase superfamily. tRNA (adenine-N(6)-)-methyltransferase family.</text>
</comment>
<comment type="sequence caution" evidence="2">
    <conflict type="erroneous initiation">
        <sequence resource="EMBL-CDS" id="AAO75945"/>
    </conflict>
</comment>
<name>TRMN6_BACTN</name>
<keyword id="KW-0963">Cytoplasm</keyword>
<keyword id="KW-0489">Methyltransferase</keyword>
<keyword id="KW-1185">Reference proteome</keyword>
<keyword id="KW-0949">S-adenosyl-L-methionine</keyword>
<keyword id="KW-0808">Transferase</keyword>
<keyword id="KW-0819">tRNA processing</keyword>
<dbReference type="EC" id="2.1.1.223" evidence="1"/>
<dbReference type="EMBL" id="AE015928">
    <property type="protein sequence ID" value="AAO75945.1"/>
    <property type="status" value="ALT_INIT"/>
    <property type="molecule type" value="Genomic_DNA"/>
</dbReference>
<dbReference type="RefSeq" id="NP_809751.1">
    <property type="nucleotide sequence ID" value="NC_004663.1"/>
</dbReference>
<dbReference type="RefSeq" id="WP_048692148.1">
    <property type="nucleotide sequence ID" value="NC_004663.1"/>
</dbReference>
<dbReference type="SMR" id="Q8A9H7"/>
<dbReference type="FunCoup" id="Q8A9H7">
    <property type="interactions" value="18"/>
</dbReference>
<dbReference type="STRING" id="226186.BT_0838"/>
<dbReference type="PaxDb" id="226186-BT_0838"/>
<dbReference type="EnsemblBacteria" id="AAO75945">
    <property type="protein sequence ID" value="AAO75945"/>
    <property type="gene ID" value="BT_0838"/>
</dbReference>
<dbReference type="GeneID" id="60926807"/>
<dbReference type="KEGG" id="bth:BT_0838"/>
<dbReference type="PATRIC" id="fig|226186.12.peg.855"/>
<dbReference type="eggNOG" id="COG4123">
    <property type="taxonomic scope" value="Bacteria"/>
</dbReference>
<dbReference type="HOGENOM" id="CLU_061983_0_0_10"/>
<dbReference type="InParanoid" id="Q8A9H7"/>
<dbReference type="OrthoDB" id="5383291at2"/>
<dbReference type="Proteomes" id="UP000001414">
    <property type="component" value="Chromosome"/>
</dbReference>
<dbReference type="GO" id="GO:0005737">
    <property type="term" value="C:cytoplasm"/>
    <property type="evidence" value="ECO:0007669"/>
    <property type="project" value="UniProtKB-SubCell"/>
</dbReference>
<dbReference type="GO" id="GO:0003676">
    <property type="term" value="F:nucleic acid binding"/>
    <property type="evidence" value="ECO:0007669"/>
    <property type="project" value="InterPro"/>
</dbReference>
<dbReference type="GO" id="GO:0016430">
    <property type="term" value="F:tRNA (adenine-N6)-methyltransferase activity"/>
    <property type="evidence" value="ECO:0007669"/>
    <property type="project" value="UniProtKB-UniRule"/>
</dbReference>
<dbReference type="GO" id="GO:0032259">
    <property type="term" value="P:methylation"/>
    <property type="evidence" value="ECO:0007669"/>
    <property type="project" value="UniProtKB-KW"/>
</dbReference>
<dbReference type="GO" id="GO:0008033">
    <property type="term" value="P:tRNA processing"/>
    <property type="evidence" value="ECO:0007669"/>
    <property type="project" value="UniProtKB-UniRule"/>
</dbReference>
<dbReference type="CDD" id="cd02440">
    <property type="entry name" value="AdoMet_MTases"/>
    <property type="match status" value="1"/>
</dbReference>
<dbReference type="Gene3D" id="3.40.50.150">
    <property type="entry name" value="Vaccinia Virus protein VP39"/>
    <property type="match status" value="1"/>
</dbReference>
<dbReference type="HAMAP" id="MF_01872">
    <property type="entry name" value="tRNA_methyltr_YfiC"/>
    <property type="match status" value="1"/>
</dbReference>
<dbReference type="InterPro" id="IPR002052">
    <property type="entry name" value="DNA_methylase_N6_adenine_CS"/>
</dbReference>
<dbReference type="InterPro" id="IPR029063">
    <property type="entry name" value="SAM-dependent_MTases_sf"/>
</dbReference>
<dbReference type="InterPro" id="IPR007848">
    <property type="entry name" value="Small_mtfrase_dom"/>
</dbReference>
<dbReference type="InterPro" id="IPR050210">
    <property type="entry name" value="tRNA_Adenine-N(6)_MTase"/>
</dbReference>
<dbReference type="InterPro" id="IPR022882">
    <property type="entry name" value="tRNA_adenine-N6_MeTrfase"/>
</dbReference>
<dbReference type="PANTHER" id="PTHR47739">
    <property type="entry name" value="TRNA1(VAL) (ADENINE(37)-N6)-METHYLTRANSFERASE"/>
    <property type="match status" value="1"/>
</dbReference>
<dbReference type="PANTHER" id="PTHR47739:SF1">
    <property type="entry name" value="TRNA1(VAL) (ADENINE(37)-N6)-METHYLTRANSFERASE"/>
    <property type="match status" value="1"/>
</dbReference>
<dbReference type="Pfam" id="PF05175">
    <property type="entry name" value="MTS"/>
    <property type="match status" value="1"/>
</dbReference>
<dbReference type="PRINTS" id="PR00507">
    <property type="entry name" value="N12N6MTFRASE"/>
</dbReference>
<dbReference type="SUPFAM" id="SSF53335">
    <property type="entry name" value="S-adenosyl-L-methionine-dependent methyltransferases"/>
    <property type="match status" value="1"/>
</dbReference>
<dbReference type="PROSITE" id="PS00092">
    <property type="entry name" value="N6_MTASE"/>
    <property type="match status" value="1"/>
</dbReference>
<gene>
    <name type="ordered locus">BT_0838</name>
</gene>